<feature type="chain" id="PRO_1000080829" description="Transcriptional repressor NrdR">
    <location>
        <begin position="1"/>
        <end position="149"/>
    </location>
</feature>
<feature type="domain" description="ATP-cone" evidence="1">
    <location>
        <begin position="49"/>
        <end position="139"/>
    </location>
</feature>
<feature type="zinc finger region" evidence="1">
    <location>
        <begin position="3"/>
        <end position="34"/>
    </location>
</feature>
<comment type="function">
    <text evidence="1">Negatively regulates transcription of bacterial ribonucleotide reductase nrd genes and operons by binding to NrdR-boxes.</text>
</comment>
<comment type="cofactor">
    <cofactor evidence="1">
        <name>Zn(2+)</name>
        <dbReference type="ChEBI" id="CHEBI:29105"/>
    </cofactor>
    <text evidence="1">Binds 1 zinc ion.</text>
</comment>
<comment type="similarity">
    <text evidence="1">Belongs to the NrdR family.</text>
</comment>
<name>NRDR_SHESA</name>
<organism>
    <name type="scientific">Shewanella sp. (strain ANA-3)</name>
    <dbReference type="NCBI Taxonomy" id="94122"/>
    <lineage>
        <taxon>Bacteria</taxon>
        <taxon>Pseudomonadati</taxon>
        <taxon>Pseudomonadota</taxon>
        <taxon>Gammaproteobacteria</taxon>
        <taxon>Alteromonadales</taxon>
        <taxon>Shewanellaceae</taxon>
        <taxon>Shewanella</taxon>
    </lineage>
</organism>
<sequence length="149" mass="17102">MHCPFCSATDTKVIDSRLVAEGHQVRRRRECTECHERFTTFEGAELVMPRVIKRDGTRQPFDEEKLQAGMLRAVEKRPVSMDEIEQALSKIKSTLRATGEREVPSEMIGNLMMEQLMSLDKVAYIRFASVYRAFEDVSEFGEAIAKLQK</sequence>
<accession>A0KU61</accession>
<proteinExistence type="inferred from homology"/>
<protein>
    <recommendedName>
        <fullName evidence="1">Transcriptional repressor NrdR</fullName>
    </recommendedName>
</protein>
<evidence type="ECO:0000255" key="1">
    <source>
        <dbReference type="HAMAP-Rule" id="MF_00440"/>
    </source>
</evidence>
<reference key="1">
    <citation type="submission" date="2006-09" db="EMBL/GenBank/DDBJ databases">
        <title>Complete sequence of chromosome 1 of Shewanella sp. ANA-3.</title>
        <authorList>
            <person name="Copeland A."/>
            <person name="Lucas S."/>
            <person name="Lapidus A."/>
            <person name="Barry K."/>
            <person name="Detter J.C."/>
            <person name="Glavina del Rio T."/>
            <person name="Hammon N."/>
            <person name="Israni S."/>
            <person name="Dalin E."/>
            <person name="Tice H."/>
            <person name="Pitluck S."/>
            <person name="Chertkov O."/>
            <person name="Brettin T."/>
            <person name="Bruce D."/>
            <person name="Han C."/>
            <person name="Tapia R."/>
            <person name="Gilna P."/>
            <person name="Schmutz J."/>
            <person name="Larimer F."/>
            <person name="Land M."/>
            <person name="Hauser L."/>
            <person name="Kyrpides N."/>
            <person name="Kim E."/>
            <person name="Newman D."/>
            <person name="Salticov C."/>
            <person name="Konstantinidis K."/>
            <person name="Klappenback J."/>
            <person name="Tiedje J."/>
            <person name="Richardson P."/>
        </authorList>
    </citation>
    <scope>NUCLEOTIDE SEQUENCE [LARGE SCALE GENOMIC DNA]</scope>
    <source>
        <strain>ANA-3</strain>
    </source>
</reference>
<keyword id="KW-0067">ATP-binding</keyword>
<keyword id="KW-0238">DNA-binding</keyword>
<keyword id="KW-0479">Metal-binding</keyword>
<keyword id="KW-0547">Nucleotide-binding</keyword>
<keyword id="KW-0678">Repressor</keyword>
<keyword id="KW-0804">Transcription</keyword>
<keyword id="KW-0805">Transcription regulation</keyword>
<keyword id="KW-0862">Zinc</keyword>
<keyword id="KW-0863">Zinc-finger</keyword>
<dbReference type="EMBL" id="CP000469">
    <property type="protein sequence ID" value="ABK47330.1"/>
    <property type="molecule type" value="Genomic_DNA"/>
</dbReference>
<dbReference type="RefSeq" id="WP_011073317.1">
    <property type="nucleotide sequence ID" value="NC_008577.1"/>
</dbReference>
<dbReference type="SMR" id="A0KU61"/>
<dbReference type="STRING" id="94122.Shewana3_1095"/>
<dbReference type="GeneID" id="94727094"/>
<dbReference type="KEGG" id="shn:Shewana3_1095"/>
<dbReference type="eggNOG" id="COG1327">
    <property type="taxonomic scope" value="Bacteria"/>
</dbReference>
<dbReference type="HOGENOM" id="CLU_108412_0_0_6"/>
<dbReference type="OrthoDB" id="9807461at2"/>
<dbReference type="Proteomes" id="UP000002589">
    <property type="component" value="Chromosome"/>
</dbReference>
<dbReference type="GO" id="GO:0005524">
    <property type="term" value="F:ATP binding"/>
    <property type="evidence" value="ECO:0007669"/>
    <property type="project" value="UniProtKB-KW"/>
</dbReference>
<dbReference type="GO" id="GO:0003677">
    <property type="term" value="F:DNA binding"/>
    <property type="evidence" value="ECO:0007669"/>
    <property type="project" value="UniProtKB-KW"/>
</dbReference>
<dbReference type="GO" id="GO:0008270">
    <property type="term" value="F:zinc ion binding"/>
    <property type="evidence" value="ECO:0007669"/>
    <property type="project" value="UniProtKB-UniRule"/>
</dbReference>
<dbReference type="GO" id="GO:0045892">
    <property type="term" value="P:negative regulation of DNA-templated transcription"/>
    <property type="evidence" value="ECO:0007669"/>
    <property type="project" value="UniProtKB-UniRule"/>
</dbReference>
<dbReference type="HAMAP" id="MF_00440">
    <property type="entry name" value="NrdR"/>
    <property type="match status" value="1"/>
</dbReference>
<dbReference type="InterPro" id="IPR005144">
    <property type="entry name" value="ATP-cone_dom"/>
</dbReference>
<dbReference type="InterPro" id="IPR055173">
    <property type="entry name" value="NrdR-like_N"/>
</dbReference>
<dbReference type="InterPro" id="IPR003796">
    <property type="entry name" value="RNR_NrdR-like"/>
</dbReference>
<dbReference type="NCBIfam" id="TIGR00244">
    <property type="entry name" value="transcriptional regulator NrdR"/>
    <property type="match status" value="1"/>
</dbReference>
<dbReference type="PANTHER" id="PTHR30455">
    <property type="entry name" value="TRANSCRIPTIONAL REPRESSOR NRDR"/>
    <property type="match status" value="1"/>
</dbReference>
<dbReference type="PANTHER" id="PTHR30455:SF2">
    <property type="entry name" value="TRANSCRIPTIONAL REPRESSOR NRDR"/>
    <property type="match status" value="1"/>
</dbReference>
<dbReference type="Pfam" id="PF03477">
    <property type="entry name" value="ATP-cone"/>
    <property type="match status" value="1"/>
</dbReference>
<dbReference type="Pfam" id="PF22811">
    <property type="entry name" value="Zn_ribbon_NrdR"/>
    <property type="match status" value="1"/>
</dbReference>
<dbReference type="PROSITE" id="PS51161">
    <property type="entry name" value="ATP_CONE"/>
    <property type="match status" value="1"/>
</dbReference>
<gene>
    <name evidence="1" type="primary">nrdR</name>
    <name type="ordered locus">Shewana3_1095</name>
</gene>